<name>Y355_STRP6</name>
<dbReference type="EMBL" id="CP000003">
    <property type="protein sequence ID" value="AAT86490.1"/>
    <property type="molecule type" value="Genomic_DNA"/>
</dbReference>
<dbReference type="RefSeq" id="WP_002985847.1">
    <property type="nucleotide sequence ID" value="NC_006086.1"/>
</dbReference>
<dbReference type="SMR" id="Q5XDM3"/>
<dbReference type="KEGG" id="spa:M6_Spy0355"/>
<dbReference type="HOGENOM" id="CLU_159890_1_0_9"/>
<dbReference type="Proteomes" id="UP000001167">
    <property type="component" value="Chromosome"/>
</dbReference>
<dbReference type="GO" id="GO:0005737">
    <property type="term" value="C:cytoplasm"/>
    <property type="evidence" value="ECO:0007669"/>
    <property type="project" value="UniProtKB-SubCell"/>
</dbReference>
<dbReference type="HAMAP" id="MF_01126">
    <property type="entry name" value="UPF0298"/>
    <property type="match status" value="1"/>
</dbReference>
<dbReference type="InterPro" id="IPR016979">
    <property type="entry name" value="DUF2129"/>
</dbReference>
<dbReference type="NCBIfam" id="NF002631">
    <property type="entry name" value="PRK02302.1"/>
    <property type="match status" value="1"/>
</dbReference>
<dbReference type="Pfam" id="PF09902">
    <property type="entry name" value="DUF2129"/>
    <property type="match status" value="1"/>
</dbReference>
<dbReference type="PIRSF" id="PIRSF031653">
    <property type="entry name" value="UCP031653"/>
    <property type="match status" value="1"/>
</dbReference>
<keyword id="KW-0963">Cytoplasm</keyword>
<sequence>MFQKQERIGLVVYLYYNRDARKLSKFGDLYYHSKRSRYLIIYINKNDLDTKLEEMRRLKCVKDIRPSAFDDIDRQFVGNLHRDETNNHQKG</sequence>
<gene>
    <name type="ordered locus">M6_Spy0355</name>
</gene>
<organism>
    <name type="scientific">Streptococcus pyogenes serotype M6 (strain ATCC BAA-946 / MGAS10394)</name>
    <dbReference type="NCBI Taxonomy" id="286636"/>
    <lineage>
        <taxon>Bacteria</taxon>
        <taxon>Bacillati</taxon>
        <taxon>Bacillota</taxon>
        <taxon>Bacilli</taxon>
        <taxon>Lactobacillales</taxon>
        <taxon>Streptococcaceae</taxon>
        <taxon>Streptococcus</taxon>
    </lineage>
</organism>
<reference key="1">
    <citation type="journal article" date="2004" name="J. Infect. Dis.">
        <title>Progress toward characterization of the group A Streptococcus metagenome: complete genome sequence of a macrolide-resistant serotype M6 strain.</title>
        <authorList>
            <person name="Banks D.J."/>
            <person name="Porcella S.F."/>
            <person name="Barbian K.D."/>
            <person name="Beres S.B."/>
            <person name="Philips L.E."/>
            <person name="Voyich J.M."/>
            <person name="DeLeo F.R."/>
            <person name="Martin J.M."/>
            <person name="Somerville G.A."/>
            <person name="Musser J.M."/>
        </authorList>
    </citation>
    <scope>NUCLEOTIDE SEQUENCE [LARGE SCALE GENOMIC DNA]</scope>
    <source>
        <strain>ATCC BAA-946 / MGAS10394</strain>
    </source>
</reference>
<feature type="chain" id="PRO_0000074682" description="UPF0298 protein M6_Spy0355">
    <location>
        <begin position="1"/>
        <end position="91"/>
    </location>
</feature>
<evidence type="ECO:0000255" key="1">
    <source>
        <dbReference type="HAMAP-Rule" id="MF_01126"/>
    </source>
</evidence>
<proteinExistence type="inferred from homology"/>
<protein>
    <recommendedName>
        <fullName evidence="1">UPF0298 protein M6_Spy0355</fullName>
    </recommendedName>
</protein>
<accession>Q5XDM3</accession>
<comment type="subcellular location">
    <subcellularLocation>
        <location evidence="1">Cytoplasm</location>
    </subcellularLocation>
</comment>
<comment type="similarity">
    <text evidence="1">Belongs to the UPF0298 family.</text>
</comment>